<dbReference type="EMBL" id="KC164505">
    <property type="protein sequence ID" value="AFY13312.1"/>
    <property type="molecule type" value="Genomic_RNA"/>
</dbReference>
<dbReference type="RefSeq" id="YP_007188584.1">
    <property type="nucleotide sequence ID" value="NC_038294.1"/>
</dbReference>
<dbReference type="PDB" id="7P72">
    <property type="method" value="X-ray"/>
    <property type="resolution" value="2.15 A"/>
    <property type="chains" value="B=73-82"/>
</dbReference>
<dbReference type="PDBsum" id="7P72"/>
<dbReference type="SMR" id="K9N5R3"/>
<dbReference type="BioGRID" id="4383877">
    <property type="interactions" value="44"/>
</dbReference>
<dbReference type="IntAct" id="K9N5R3">
    <property type="interactions" value="39"/>
</dbReference>
<dbReference type="TCDB" id="1.A.65.1.4">
    <property type="family name" value="the coronavirus viroporin e protein (viroporin e) family"/>
</dbReference>
<dbReference type="GeneID" id="37616437"/>
<dbReference type="Proteomes" id="UP000139997">
    <property type="component" value="Genome"/>
</dbReference>
<dbReference type="GO" id="GO:0044177">
    <property type="term" value="C:host cell Golgi apparatus"/>
    <property type="evidence" value="ECO:0000314"/>
    <property type="project" value="UniProtKB"/>
</dbReference>
<dbReference type="GO" id="GO:0044178">
    <property type="term" value="C:host cell Golgi membrane"/>
    <property type="evidence" value="ECO:0007669"/>
    <property type="project" value="UniProtKB-SubCell"/>
</dbReference>
<dbReference type="GO" id="GO:0016020">
    <property type="term" value="C:membrane"/>
    <property type="evidence" value="ECO:0007669"/>
    <property type="project" value="UniProtKB-UniRule"/>
</dbReference>
<dbReference type="GO" id="GO:0140975">
    <property type="term" value="P:disruption of cellular anatomical structure in another organism"/>
    <property type="evidence" value="ECO:0007669"/>
    <property type="project" value="UniProtKB-UniRule"/>
</dbReference>
<dbReference type="GO" id="GO:0046760">
    <property type="term" value="P:viral budding from Golgi membrane"/>
    <property type="evidence" value="ECO:0007669"/>
    <property type="project" value="UniProtKB-UniRule"/>
</dbReference>
<dbReference type="CDD" id="cd21533">
    <property type="entry name" value="MERS-CoV-like_E"/>
    <property type="match status" value="1"/>
</dbReference>
<dbReference type="Gene3D" id="6.10.250.1810">
    <property type="match status" value="1"/>
</dbReference>
<dbReference type="HAMAP" id="MF_04204">
    <property type="entry name" value="BETA_CORONA_E"/>
    <property type="match status" value="1"/>
</dbReference>
<dbReference type="InterPro" id="IPR044379">
    <property type="entry name" value="E_MERS-CoV-like"/>
</dbReference>
<dbReference type="InterPro" id="IPR043506">
    <property type="entry name" value="E_protein_bCoV"/>
</dbReference>
<dbReference type="InterPro" id="IPR003873">
    <property type="entry name" value="E_protein_CoV"/>
</dbReference>
<dbReference type="Pfam" id="PF02723">
    <property type="entry name" value="CoV_E"/>
    <property type="match status" value="1"/>
</dbReference>
<dbReference type="PROSITE" id="PS51926">
    <property type="entry name" value="COV_E"/>
    <property type="match status" value="1"/>
</dbReference>
<sequence length="82" mass="9354">MLPFVQERIGLFIVNFFIFTVVCAITLLVCMAFLTATRLCVQCMTGFNTLLVQPALYLYNTGRSVYVKFQDSKPPLPPDEWV</sequence>
<organism>
    <name type="scientific">Middle East respiratory syndrome-related coronavirus (isolate United Kingdom/H123990006/2012)</name>
    <name type="common">MERS-CoV</name>
    <name type="synonym">Betacoronavirus England 1</name>
    <dbReference type="NCBI Taxonomy" id="1263720"/>
    <lineage>
        <taxon>Viruses</taxon>
        <taxon>Riboviria</taxon>
        <taxon>Orthornavirae</taxon>
        <taxon>Pisuviricota</taxon>
        <taxon>Pisoniviricetes</taxon>
        <taxon>Nidovirales</taxon>
        <taxon>Cornidovirineae</taxon>
        <taxon>Coronaviridae</taxon>
        <taxon>Orthocoronavirinae</taxon>
        <taxon>Betacoronavirus</taxon>
        <taxon>Merbecovirus</taxon>
        <taxon>Middle East respiratory syndrome-related coronavirus</taxon>
    </lineage>
</organism>
<evidence type="ECO:0000255" key="1">
    <source>
        <dbReference type="HAMAP-Rule" id="MF_04204"/>
    </source>
</evidence>
<evidence type="ECO:0000269" key="2">
    <source>
    </source>
</evidence>
<evidence type="ECO:0007829" key="3">
    <source>
        <dbReference type="PDB" id="7P72"/>
    </source>
</evidence>
<protein>
    <recommendedName>
        <fullName evidence="1">Envelope small membrane protein</fullName>
        <shortName evidence="1">E protein</shortName>
        <shortName evidence="1">sM protein</shortName>
    </recommendedName>
</protein>
<name>VEMP_MERS1</name>
<accession>K9N5R3</accession>
<organismHost>
    <name type="scientific">Camelus dromedarius</name>
    <name type="common">Dromedary</name>
    <name type="synonym">Arabian camel</name>
    <dbReference type="NCBI Taxonomy" id="9838"/>
</organismHost>
<organismHost>
    <name type="scientific">Homo sapiens</name>
    <name type="common">Human</name>
    <dbReference type="NCBI Taxonomy" id="9606"/>
</organismHost>
<gene>
    <name evidence="1" type="primary">E</name>
    <name type="synonym">sM</name>
    <name type="ORF">4</name>
</gene>
<feature type="chain" id="PRO_0000422468" description="Envelope small membrane protein">
    <location>
        <begin position="1"/>
        <end position="82"/>
    </location>
</feature>
<feature type="topological domain" description="Virion surface" evidence="1">
    <location>
        <begin position="1"/>
        <end position="16"/>
    </location>
</feature>
<feature type="transmembrane region" description="Helical" evidence="1">
    <location>
        <begin position="17"/>
        <end position="37"/>
    </location>
</feature>
<feature type="topological domain" description="Intravirion" evidence="1">
    <location>
        <begin position="38"/>
        <end position="78"/>
    </location>
</feature>
<feature type="strand" evidence="3">
    <location>
        <begin position="79"/>
        <end position="82"/>
    </location>
</feature>
<reference key="1">
    <citation type="journal article" date="2012" name="Eurosurveillance">
        <title>Severe respiratory illness caused by a novel coronavirus, in a patient transferred to the United Kingdom from the Middle East, September 2012.</title>
        <authorList>
            <person name="Bermingham A."/>
            <person name="Chand M.A."/>
            <person name="Brown C.S."/>
            <person name="Aarons E."/>
            <person name="Tong C."/>
            <person name="Langrish C."/>
            <person name="Hoschler K."/>
            <person name="Brown K."/>
            <person name="Galiano M."/>
            <person name="Myers R."/>
            <person name="Pebody R.G."/>
            <person name="Green H.K."/>
            <person name="Boddington N.L."/>
            <person name="Gopal R."/>
            <person name="Price N."/>
            <person name="Newsholme W."/>
            <person name="Drosten C."/>
            <person name="Fouchier R.A."/>
            <person name="Zambon M."/>
        </authorList>
    </citation>
    <scope>NUCLEOTIDE SEQUENCE [GENOMIC RNA]</scope>
</reference>
<reference key="2">
    <citation type="journal article" date="2015" name="Virus Res.">
        <title>MERS coronavirus envelope protein has a single transmembrane domain that forms pentameric ion channels.</title>
        <authorList>
            <person name="Surya W."/>
            <person name="Li Y."/>
            <person name="Verdia-Baguena C."/>
            <person name="Aguilella V.M."/>
            <person name="Torres J."/>
        </authorList>
    </citation>
    <scope>FUNCTION</scope>
    <scope>SUBUNIT</scope>
</reference>
<proteinExistence type="evidence at protein level"/>
<comment type="function">
    <text evidence="1 2">Plays a central role in virus morphogenesis and assembly. Acts as a viroporin and self-assembles in host membranes forming pentameric protein-lipid pores that allow ion transport. Also plays a role in the induction of apoptosis.</text>
</comment>
<comment type="subunit">
    <text evidence="1 2">Homopentamer. Interacts with membrane protein M in the budding compartment of the host cell, which is located between endoplasmic reticulum and the Golgi complex. Interacts with Nucleoprotein.</text>
</comment>
<comment type="interaction">
    <interactant intactId="EBI-26374535">
        <id>K9N5R3</id>
    </interactant>
    <interactant intactId="EBI-2340947">
        <id>Q8N448</id>
        <label>LNX2</label>
    </interactant>
    <organismsDiffer>true</organismsDiffer>
    <experiments>2</experiments>
</comment>
<comment type="interaction">
    <interactant intactId="EBI-26374535">
        <id>K9N5R3</id>
    </interactant>
    <interactant intactId="EBI-1171427">
        <id>O95049</id>
        <label>TJP3</label>
    </interactant>
    <organismsDiffer>true</organismsDiffer>
    <experiments>2</experiments>
</comment>
<comment type="subcellular location">
    <subcellularLocation>
        <location evidence="1">Host Golgi apparatus membrane</location>
        <topology evidence="1">Single-pass type III membrane protein</topology>
    </subcellularLocation>
    <text evidence="1">The cytoplasmic tail functions as a Golgi complex-targeting signal.</text>
</comment>
<comment type="similarity">
    <text evidence="1">Belongs to the betacoronaviruses E protein family.</text>
</comment>
<keyword id="KW-0002">3D-structure</keyword>
<keyword id="KW-0053">Apoptosis</keyword>
<keyword id="KW-1040">Host Golgi apparatus</keyword>
<keyword id="KW-1043">Host membrane</keyword>
<keyword id="KW-0472">Membrane</keyword>
<keyword id="KW-1185">Reference proteome</keyword>
<keyword id="KW-0812">Transmembrane</keyword>
<keyword id="KW-1133">Transmembrane helix</keyword>